<name>PUR7_STRP8</name>
<comment type="catalytic activity">
    <reaction evidence="1">
        <text>5-amino-1-(5-phospho-D-ribosyl)imidazole-4-carboxylate + L-aspartate + ATP = (2S)-2-[5-amino-1-(5-phospho-beta-D-ribosyl)imidazole-4-carboxamido]succinate + ADP + phosphate + 2 H(+)</text>
        <dbReference type="Rhea" id="RHEA:22628"/>
        <dbReference type="ChEBI" id="CHEBI:15378"/>
        <dbReference type="ChEBI" id="CHEBI:29991"/>
        <dbReference type="ChEBI" id="CHEBI:30616"/>
        <dbReference type="ChEBI" id="CHEBI:43474"/>
        <dbReference type="ChEBI" id="CHEBI:58443"/>
        <dbReference type="ChEBI" id="CHEBI:77657"/>
        <dbReference type="ChEBI" id="CHEBI:456216"/>
        <dbReference type="EC" id="6.3.2.6"/>
    </reaction>
</comment>
<comment type="pathway">
    <text evidence="1">Purine metabolism; IMP biosynthesis via de novo pathway; 5-amino-1-(5-phospho-D-ribosyl)imidazole-4-carboxamide from 5-amino-1-(5-phospho-D-ribosyl)imidazole-4-carboxylate: step 1/2.</text>
</comment>
<comment type="similarity">
    <text evidence="1">Belongs to the SAICAR synthetase family.</text>
</comment>
<comment type="sequence caution" evidence="2">
    <conflict type="erroneous initiation">
        <sequence resource="EMBL-CDS" id="AAL96854"/>
    </conflict>
</comment>
<sequence>MTNQLIYKGKAKDIYSTKDENVIRTVYKDQATMLNGARKETIDGKGALNNQISSLIFEKLNKAGVVTHYIEQISKNEQLNKKVDIIPLEVVLRNVTAGSFSKRFGVEEGRVLETPIVEFYYKNDDLNDPFINDEHVKFLGIVNDEEIAYLKGETRRINELLKGWFAQIGLNLIDFKLEFGFDQEGTIILADEFSPDNCRLWDKNGNHMDKDVFRRDLGNLTDVYQVVLEKLIAL</sequence>
<protein>
    <recommendedName>
        <fullName evidence="1">Phosphoribosylaminoimidazole-succinocarboxamide synthase</fullName>
        <ecNumber evidence="1">6.3.2.6</ecNumber>
    </recommendedName>
    <alternativeName>
        <fullName evidence="1">SAICAR synthetase</fullName>
    </alternativeName>
</protein>
<reference key="1">
    <citation type="journal article" date="2002" name="Proc. Natl. Acad. Sci. U.S.A.">
        <title>Genome sequence and comparative microarray analysis of serotype M18 group A Streptococcus strains associated with acute rheumatic fever outbreaks.</title>
        <authorList>
            <person name="Smoot J.C."/>
            <person name="Barbian K.D."/>
            <person name="Van Gompel J.J."/>
            <person name="Smoot L.M."/>
            <person name="Chaussee M.S."/>
            <person name="Sylva G.L."/>
            <person name="Sturdevant D.E."/>
            <person name="Ricklefs S.M."/>
            <person name="Porcella S.F."/>
            <person name="Parkins L.D."/>
            <person name="Beres S.B."/>
            <person name="Campbell D.S."/>
            <person name="Smith T.M."/>
            <person name="Zhang Q."/>
            <person name="Kapur V."/>
            <person name="Daly J.A."/>
            <person name="Veasy L.G."/>
            <person name="Musser J.M."/>
        </authorList>
    </citation>
    <scope>NUCLEOTIDE SEQUENCE [LARGE SCALE GENOMIC DNA]</scope>
    <source>
        <strain>MGAS8232</strain>
    </source>
</reference>
<keyword id="KW-0067">ATP-binding</keyword>
<keyword id="KW-0436">Ligase</keyword>
<keyword id="KW-0547">Nucleotide-binding</keyword>
<keyword id="KW-0658">Purine biosynthesis</keyword>
<dbReference type="EC" id="6.3.2.6" evidence="1"/>
<dbReference type="EMBL" id="AE009949">
    <property type="protein sequence ID" value="AAL96854.1"/>
    <property type="status" value="ALT_INIT"/>
    <property type="molecule type" value="Genomic_DNA"/>
</dbReference>
<dbReference type="RefSeq" id="WP_017649245.1">
    <property type="nucleotide sequence ID" value="NC_003485.1"/>
</dbReference>
<dbReference type="SMR" id="Q8P315"/>
<dbReference type="KEGG" id="spm:spyM18_0025"/>
<dbReference type="HOGENOM" id="CLU_061495_2_0_9"/>
<dbReference type="UniPathway" id="UPA00074">
    <property type="reaction ID" value="UER00131"/>
</dbReference>
<dbReference type="GO" id="GO:0005524">
    <property type="term" value="F:ATP binding"/>
    <property type="evidence" value="ECO:0007669"/>
    <property type="project" value="UniProtKB-KW"/>
</dbReference>
<dbReference type="GO" id="GO:0004639">
    <property type="term" value="F:phosphoribosylaminoimidazolesuccinocarboxamide synthase activity"/>
    <property type="evidence" value="ECO:0007669"/>
    <property type="project" value="UniProtKB-UniRule"/>
</dbReference>
<dbReference type="GO" id="GO:0006189">
    <property type="term" value="P:'de novo' IMP biosynthetic process"/>
    <property type="evidence" value="ECO:0007669"/>
    <property type="project" value="UniProtKB-UniRule"/>
</dbReference>
<dbReference type="GO" id="GO:0009236">
    <property type="term" value="P:cobalamin biosynthetic process"/>
    <property type="evidence" value="ECO:0007669"/>
    <property type="project" value="InterPro"/>
</dbReference>
<dbReference type="CDD" id="cd01415">
    <property type="entry name" value="SAICAR_synt_PurC"/>
    <property type="match status" value="1"/>
</dbReference>
<dbReference type="FunFam" id="3.30.470.20:FF:000006">
    <property type="entry name" value="Phosphoribosylaminoimidazole-succinocarboxamide synthase"/>
    <property type="match status" value="1"/>
</dbReference>
<dbReference type="Gene3D" id="3.30.470.20">
    <property type="entry name" value="ATP-grasp fold, B domain"/>
    <property type="match status" value="1"/>
</dbReference>
<dbReference type="Gene3D" id="3.30.200.20">
    <property type="entry name" value="Phosphorylase Kinase, domain 1"/>
    <property type="match status" value="1"/>
</dbReference>
<dbReference type="HAMAP" id="MF_00137">
    <property type="entry name" value="SAICAR_synth"/>
    <property type="match status" value="1"/>
</dbReference>
<dbReference type="InterPro" id="IPR028923">
    <property type="entry name" value="SAICAR_synt/ADE2_N"/>
</dbReference>
<dbReference type="InterPro" id="IPR033934">
    <property type="entry name" value="SAICAR_synt_PurC"/>
</dbReference>
<dbReference type="InterPro" id="IPR001636">
    <property type="entry name" value="SAICAR_synth"/>
</dbReference>
<dbReference type="InterPro" id="IPR050089">
    <property type="entry name" value="SAICAR_synthetase"/>
</dbReference>
<dbReference type="InterPro" id="IPR018236">
    <property type="entry name" value="SAICAR_synthetase_CS"/>
</dbReference>
<dbReference type="NCBIfam" id="TIGR00081">
    <property type="entry name" value="purC"/>
    <property type="match status" value="1"/>
</dbReference>
<dbReference type="PANTHER" id="PTHR43599">
    <property type="entry name" value="MULTIFUNCTIONAL PROTEIN ADE2"/>
    <property type="match status" value="1"/>
</dbReference>
<dbReference type="PANTHER" id="PTHR43599:SF3">
    <property type="entry name" value="SI:DKEY-6E2.2"/>
    <property type="match status" value="1"/>
</dbReference>
<dbReference type="Pfam" id="PF01259">
    <property type="entry name" value="SAICAR_synt"/>
    <property type="match status" value="1"/>
</dbReference>
<dbReference type="SUPFAM" id="SSF56104">
    <property type="entry name" value="SAICAR synthase-like"/>
    <property type="match status" value="1"/>
</dbReference>
<dbReference type="PROSITE" id="PS01057">
    <property type="entry name" value="SAICAR_SYNTHETASE_1"/>
    <property type="match status" value="1"/>
</dbReference>
<dbReference type="PROSITE" id="PS01058">
    <property type="entry name" value="SAICAR_SYNTHETASE_2"/>
    <property type="match status" value="1"/>
</dbReference>
<organism>
    <name type="scientific">Streptococcus pyogenes serotype M18 (strain MGAS8232)</name>
    <dbReference type="NCBI Taxonomy" id="186103"/>
    <lineage>
        <taxon>Bacteria</taxon>
        <taxon>Bacillati</taxon>
        <taxon>Bacillota</taxon>
        <taxon>Bacilli</taxon>
        <taxon>Lactobacillales</taxon>
        <taxon>Streptococcaceae</taxon>
        <taxon>Streptococcus</taxon>
    </lineage>
</organism>
<gene>
    <name evidence="1" type="primary">purC</name>
    <name type="ordered locus">spyM18_0025</name>
</gene>
<accession>Q8P315</accession>
<evidence type="ECO:0000255" key="1">
    <source>
        <dbReference type="HAMAP-Rule" id="MF_00137"/>
    </source>
</evidence>
<evidence type="ECO:0000305" key="2"/>
<proteinExistence type="inferred from homology"/>
<feature type="chain" id="PRO_0000100886" description="Phosphoribosylaminoimidazole-succinocarboxamide synthase">
    <location>
        <begin position="1"/>
        <end position="234"/>
    </location>
</feature>